<sequence length="304" mass="34051">MKKKILFWILGIIGILIIGGGAYAYSIYSSVSKTLDEVHKPLKRDKDSKGTEEVKISKSEPVSILLLGVDERGNEKGRSDSLILITLNPKNNSMKTVSIPRDTYTEIVGKGKSDKINHAYAFGGVDMSVATVEKFLNVPINYYIEVNMAGFKDIVDAVGGVDVNNDLEFKQDKHHFAKGNIHLTGDEALSFTRMRYEDPRGDFGRQMRQRQVMQAVIKKGATFSSLTSYGDVLTAIQKNVKTNLTQDQMFDMQKNYKNCLENSEDIQIPGDGHKAADGIWYYYVPEAAKQDLTNKLRAHLEVTK</sequence>
<organism>
    <name type="scientific">Bacillus cereus (strain ATCC 14579 / DSM 31 / CCUG 7414 / JCM 2152 / NBRC 15305 / NCIMB 9373 / NCTC 2599 / NRRL B-3711)</name>
    <dbReference type="NCBI Taxonomy" id="226900"/>
    <lineage>
        <taxon>Bacteria</taxon>
        <taxon>Bacillati</taxon>
        <taxon>Bacillota</taxon>
        <taxon>Bacilli</taxon>
        <taxon>Bacillales</taxon>
        <taxon>Bacillaceae</taxon>
        <taxon>Bacillus</taxon>
        <taxon>Bacillus cereus group</taxon>
    </lineage>
</organism>
<name>TAGU_BACCR</name>
<accession>Q815A2</accession>
<keyword id="KW-1003">Cell membrane</keyword>
<keyword id="KW-0961">Cell wall biogenesis/degradation</keyword>
<keyword id="KW-0472">Membrane</keyword>
<keyword id="KW-1185">Reference proteome</keyword>
<keyword id="KW-0735">Signal-anchor</keyword>
<keyword id="KW-0808">Transferase</keyword>
<keyword id="KW-0812">Transmembrane</keyword>
<keyword id="KW-1133">Transmembrane helix</keyword>
<proteinExistence type="inferred from homology"/>
<comment type="function">
    <text evidence="1">May catalyze the final step in cell wall teichoic acid biosynthesis, the transfer of the anionic cell wall polymers (APs) from their lipid-linked precursor to the cell wall peptidoglycan (PG).</text>
</comment>
<comment type="pathway">
    <text evidence="1">Cell wall biogenesis.</text>
</comment>
<comment type="subcellular location">
    <subcellularLocation>
        <location evidence="1">Cell membrane</location>
        <topology evidence="1">Single-pass type II membrane protein</topology>
    </subcellularLocation>
</comment>
<comment type="similarity">
    <text evidence="1">Belongs to the LytR/CpsA/Psr (LCP) family.</text>
</comment>
<dbReference type="EC" id="2.7.8.-" evidence="1"/>
<dbReference type="EMBL" id="AE016877">
    <property type="protein sequence ID" value="AAP12129.1"/>
    <property type="molecule type" value="Genomic_DNA"/>
</dbReference>
<dbReference type="RefSeq" id="NP_834928.1">
    <property type="nucleotide sequence ID" value="NC_004722.1"/>
</dbReference>
<dbReference type="RefSeq" id="WP_000727039.1">
    <property type="nucleotide sequence ID" value="NC_004722.1"/>
</dbReference>
<dbReference type="SMR" id="Q815A2"/>
<dbReference type="STRING" id="226900.BC_5265"/>
<dbReference type="KEGG" id="bce:BC5265"/>
<dbReference type="PATRIC" id="fig|226900.8.peg.5435"/>
<dbReference type="HOGENOM" id="CLU_016455_2_2_9"/>
<dbReference type="OrthoDB" id="27330at2"/>
<dbReference type="Proteomes" id="UP000001417">
    <property type="component" value="Chromosome"/>
</dbReference>
<dbReference type="GO" id="GO:0005886">
    <property type="term" value="C:plasma membrane"/>
    <property type="evidence" value="ECO:0007669"/>
    <property type="project" value="UniProtKB-SubCell"/>
</dbReference>
<dbReference type="GO" id="GO:0016780">
    <property type="term" value="F:phosphotransferase activity, for other substituted phosphate groups"/>
    <property type="evidence" value="ECO:0007669"/>
    <property type="project" value="UniProtKB-UniRule"/>
</dbReference>
<dbReference type="GO" id="GO:0070726">
    <property type="term" value="P:cell wall assembly"/>
    <property type="evidence" value="ECO:0007669"/>
    <property type="project" value="UniProtKB-UniRule"/>
</dbReference>
<dbReference type="Gene3D" id="3.40.630.190">
    <property type="entry name" value="LCP protein"/>
    <property type="match status" value="1"/>
</dbReference>
<dbReference type="HAMAP" id="MF_01140">
    <property type="entry name" value="TagU_transferase"/>
    <property type="match status" value="1"/>
</dbReference>
<dbReference type="InterPro" id="IPR050922">
    <property type="entry name" value="LytR/CpsA/Psr_CW_biosynth"/>
</dbReference>
<dbReference type="InterPro" id="IPR004474">
    <property type="entry name" value="LytR_CpsA_psr"/>
</dbReference>
<dbReference type="InterPro" id="IPR023734">
    <property type="entry name" value="TagU"/>
</dbReference>
<dbReference type="NCBIfam" id="TIGR00350">
    <property type="entry name" value="lytR_cpsA_psr"/>
    <property type="match status" value="1"/>
</dbReference>
<dbReference type="NCBIfam" id="NF006897">
    <property type="entry name" value="PRK09379.1"/>
    <property type="match status" value="1"/>
</dbReference>
<dbReference type="PANTHER" id="PTHR33392">
    <property type="entry name" value="POLYISOPRENYL-TEICHOIC ACID--PEPTIDOGLYCAN TEICHOIC ACID TRANSFERASE TAGU"/>
    <property type="match status" value="1"/>
</dbReference>
<dbReference type="PANTHER" id="PTHR33392:SF6">
    <property type="entry name" value="POLYISOPRENYL-TEICHOIC ACID--PEPTIDOGLYCAN TEICHOIC ACID TRANSFERASE TAGU"/>
    <property type="match status" value="1"/>
</dbReference>
<dbReference type="Pfam" id="PF03816">
    <property type="entry name" value="LytR_cpsA_psr"/>
    <property type="match status" value="1"/>
</dbReference>
<reference key="1">
    <citation type="journal article" date="2003" name="Nature">
        <title>Genome sequence of Bacillus cereus and comparative analysis with Bacillus anthracis.</title>
        <authorList>
            <person name="Ivanova N."/>
            <person name="Sorokin A."/>
            <person name="Anderson I."/>
            <person name="Galleron N."/>
            <person name="Candelon B."/>
            <person name="Kapatral V."/>
            <person name="Bhattacharyya A."/>
            <person name="Reznik G."/>
            <person name="Mikhailova N."/>
            <person name="Lapidus A."/>
            <person name="Chu L."/>
            <person name="Mazur M."/>
            <person name="Goltsman E."/>
            <person name="Larsen N."/>
            <person name="D'Souza M."/>
            <person name="Walunas T."/>
            <person name="Grechkin Y."/>
            <person name="Pusch G."/>
            <person name="Haselkorn R."/>
            <person name="Fonstein M."/>
            <person name="Ehrlich S.D."/>
            <person name="Overbeek R."/>
            <person name="Kyrpides N.C."/>
        </authorList>
    </citation>
    <scope>NUCLEOTIDE SEQUENCE [LARGE SCALE GENOMIC DNA]</scope>
    <source>
        <strain>ATCC 14579 / DSM 31 / CCUG 7414 / JCM 2152 / NBRC 15305 / NCIMB 9373 / NCTC 2599 / NRRL B-3711</strain>
    </source>
</reference>
<protein>
    <recommendedName>
        <fullName evidence="1">Polyisoprenyl-teichoic acid--peptidoglycan teichoic acid transferase TagU</fullName>
        <ecNumber evidence="1">2.7.8.-</ecNumber>
    </recommendedName>
</protein>
<gene>
    <name evidence="1" type="primary">tagU</name>
    <name type="ordered locus">BC_5265</name>
</gene>
<feature type="chain" id="PRO_0000218496" description="Polyisoprenyl-teichoic acid--peptidoglycan teichoic acid transferase TagU">
    <location>
        <begin position="1"/>
        <end position="304"/>
    </location>
</feature>
<feature type="topological domain" description="Cytoplasmic" evidence="1">
    <location>
        <begin position="1"/>
        <end position="4"/>
    </location>
</feature>
<feature type="transmembrane region" description="Helical; Signal-anchor for type II membrane protein" evidence="1">
    <location>
        <begin position="5"/>
        <end position="25"/>
    </location>
</feature>
<feature type="topological domain" description="Extracellular" evidence="1">
    <location>
        <begin position="26"/>
        <end position="304"/>
    </location>
</feature>
<evidence type="ECO:0000255" key="1">
    <source>
        <dbReference type="HAMAP-Rule" id="MF_01140"/>
    </source>
</evidence>